<protein>
    <recommendedName>
        <fullName evidence="1">Eukaryotic translation initiation factor 3 subunit I</fullName>
        <shortName evidence="1">eIF3i</shortName>
    </recommendedName>
    <alternativeName>
        <fullName evidence="1">Eukaryotic translation initiation factor 3 subunit 2</fullName>
    </alternativeName>
    <alternativeName>
        <fullName>TRIP-1 homolog</fullName>
    </alternativeName>
</protein>
<organism>
    <name type="scientific">Drosophila ananassae</name>
    <name type="common">Fruit fly</name>
    <dbReference type="NCBI Taxonomy" id="7217"/>
    <lineage>
        <taxon>Eukaryota</taxon>
        <taxon>Metazoa</taxon>
        <taxon>Ecdysozoa</taxon>
        <taxon>Arthropoda</taxon>
        <taxon>Hexapoda</taxon>
        <taxon>Insecta</taxon>
        <taxon>Pterygota</taxon>
        <taxon>Neoptera</taxon>
        <taxon>Endopterygota</taxon>
        <taxon>Diptera</taxon>
        <taxon>Brachycera</taxon>
        <taxon>Muscomorpha</taxon>
        <taxon>Ephydroidea</taxon>
        <taxon>Drosophilidae</taxon>
        <taxon>Drosophila</taxon>
        <taxon>Sophophora</taxon>
    </lineage>
</organism>
<sequence>MLQGHERSITQIKYNREGDLLFSCSKDQKPNVWYSLNGERLGTYDGHQGAVWCLDVDWESRKLITGAGDMTTKIWDVEYGTIIASIPSKSSVRTSNFSFSGNQAAYSTDKAMGQSCELFIIDVRNADSSLAEQTPTLRIPMTESKITSMLWGPLDETIITGHDNGNIAIWDIRKGQKVVDSGSDHTAGINDMQLSKDGTMFVTASKDTTAKLFDSESLMCLKTYKTERPVNSAAISPILDHVVLGGGQDAMEVTTTSTKAGKFDSRFFHLIYEEEFARLKGHFGPINSLAFHPDGKSYASGGEDGFVRVQTFDSTYFENIFE</sequence>
<reference key="1">
    <citation type="journal article" date="2007" name="Nature">
        <title>Evolution of genes and genomes on the Drosophila phylogeny.</title>
        <authorList>
            <consortium name="Drosophila 12 genomes consortium"/>
        </authorList>
    </citation>
    <scope>NUCLEOTIDE SEQUENCE [LARGE SCALE GENOMIC DNA]</scope>
    <source>
        <strain>Tucson 14024-0371.13</strain>
    </source>
</reference>
<name>EIF3I_DROAN</name>
<gene>
    <name evidence="1" type="primary">eIF3i</name>
    <name evidence="1" type="synonym">eif3-S2</name>
    <name evidence="1" type="synonym">Trip1</name>
    <name type="ORF">GF23646</name>
</gene>
<feature type="chain" id="PRO_0000365342" description="Eukaryotic translation initiation factor 3 subunit I">
    <location>
        <begin position="1"/>
        <end position="322"/>
    </location>
</feature>
<feature type="repeat" description="WD 1">
    <location>
        <begin position="4"/>
        <end position="43"/>
    </location>
</feature>
<feature type="repeat" description="WD 2">
    <location>
        <begin position="46"/>
        <end position="85"/>
    </location>
</feature>
<feature type="repeat" description="WD 3">
    <location>
        <begin position="141"/>
        <end position="180"/>
    </location>
</feature>
<feature type="repeat" description="WD 4">
    <location>
        <begin position="184"/>
        <end position="223"/>
    </location>
</feature>
<feature type="repeat" description="WD 5">
    <location>
        <begin position="281"/>
        <end position="322"/>
    </location>
</feature>
<comment type="function">
    <text evidence="1">Component of the eukaryotic translation initiation factor 3 (eIF-3) complex, which is involved in protein synthesis of a specialized repertoire of mRNAs and, together with other initiation factors, stimulates binding of mRNA and methionyl-tRNAi to the 40S ribosome. The eIF-3 complex specifically targets and initiates translation of a subset of mRNAs involved in cell proliferation.</text>
</comment>
<comment type="subunit">
    <text evidence="1">Component of the eukaryotic translation initiation factor 3 (eIF-3) complex. The eIF-3 complex interacts with pix.</text>
</comment>
<comment type="subcellular location">
    <subcellularLocation>
        <location evidence="1">Cytoplasm</location>
    </subcellularLocation>
</comment>
<comment type="similarity">
    <text evidence="1">Belongs to the eIF-3 subunit I family.</text>
</comment>
<comment type="sequence caution" evidence="2">
    <conflict type="erroneous initiation">
        <sequence resource="EMBL-CDS" id="EDV33281"/>
    </conflict>
</comment>
<evidence type="ECO:0000255" key="1">
    <source>
        <dbReference type="HAMAP-Rule" id="MF_03008"/>
    </source>
</evidence>
<evidence type="ECO:0000305" key="2"/>
<proteinExistence type="inferred from homology"/>
<dbReference type="EMBL" id="CH902624">
    <property type="protein sequence ID" value="EDV33281.1"/>
    <property type="status" value="ALT_INIT"/>
    <property type="molecule type" value="Genomic_DNA"/>
</dbReference>
<dbReference type="SMR" id="B3MVL6"/>
<dbReference type="FunCoup" id="B3MVL6">
    <property type="interactions" value="1588"/>
</dbReference>
<dbReference type="STRING" id="7217.B3MVL6"/>
<dbReference type="EnsemblMetazoa" id="FBtr0389390">
    <property type="protein sequence ID" value="FBpp0349005"/>
    <property type="gene ID" value="FBgn0100640"/>
</dbReference>
<dbReference type="EnsemblMetazoa" id="XM_001965111.4">
    <property type="protein sequence ID" value="XP_001965147.2"/>
    <property type="gene ID" value="LOC6506287"/>
</dbReference>
<dbReference type="GeneID" id="6506287"/>
<dbReference type="KEGG" id="dan:6506287"/>
<dbReference type="CTD" id="8668"/>
<dbReference type="eggNOG" id="KOG0643">
    <property type="taxonomic scope" value="Eukaryota"/>
</dbReference>
<dbReference type="InParanoid" id="B3MVL6"/>
<dbReference type="OrthoDB" id="24966at2759"/>
<dbReference type="ChiTaRS" id="Trip1">
    <property type="organism name" value="fly"/>
</dbReference>
<dbReference type="Proteomes" id="UP000007801">
    <property type="component" value="Unassembled WGS sequence"/>
</dbReference>
<dbReference type="GO" id="GO:0016282">
    <property type="term" value="C:eukaryotic 43S preinitiation complex"/>
    <property type="evidence" value="ECO:0007669"/>
    <property type="project" value="UniProtKB-UniRule"/>
</dbReference>
<dbReference type="GO" id="GO:0033290">
    <property type="term" value="C:eukaryotic 48S preinitiation complex"/>
    <property type="evidence" value="ECO:0007669"/>
    <property type="project" value="UniProtKB-UniRule"/>
</dbReference>
<dbReference type="GO" id="GO:0071541">
    <property type="term" value="C:eukaryotic translation initiation factor 3 complex, eIF3m"/>
    <property type="evidence" value="ECO:0007669"/>
    <property type="project" value="TreeGrafter"/>
</dbReference>
<dbReference type="GO" id="GO:0003723">
    <property type="term" value="F:RNA binding"/>
    <property type="evidence" value="ECO:0007669"/>
    <property type="project" value="TreeGrafter"/>
</dbReference>
<dbReference type="GO" id="GO:0003743">
    <property type="term" value="F:translation initiation factor activity"/>
    <property type="evidence" value="ECO:0007669"/>
    <property type="project" value="UniProtKB-UniRule"/>
</dbReference>
<dbReference type="GO" id="GO:0001732">
    <property type="term" value="P:formation of cytoplasmic translation initiation complex"/>
    <property type="evidence" value="ECO:0007669"/>
    <property type="project" value="UniProtKB-UniRule"/>
</dbReference>
<dbReference type="FunFam" id="2.130.10.10:FF:000127">
    <property type="entry name" value="Eukaryotic translation initiation factor 3 subunit I"/>
    <property type="match status" value="1"/>
</dbReference>
<dbReference type="Gene3D" id="2.130.10.10">
    <property type="entry name" value="YVTN repeat-like/Quinoprotein amine dehydrogenase"/>
    <property type="match status" value="1"/>
</dbReference>
<dbReference type="HAMAP" id="MF_03008">
    <property type="entry name" value="eIF3i"/>
    <property type="match status" value="1"/>
</dbReference>
<dbReference type="InterPro" id="IPR027525">
    <property type="entry name" value="eIF3i"/>
</dbReference>
<dbReference type="InterPro" id="IPR015943">
    <property type="entry name" value="WD40/YVTN_repeat-like_dom_sf"/>
</dbReference>
<dbReference type="InterPro" id="IPR019775">
    <property type="entry name" value="WD40_repeat_CS"/>
</dbReference>
<dbReference type="InterPro" id="IPR036322">
    <property type="entry name" value="WD40_repeat_dom_sf"/>
</dbReference>
<dbReference type="InterPro" id="IPR001680">
    <property type="entry name" value="WD40_rpt"/>
</dbReference>
<dbReference type="PANTHER" id="PTHR19877">
    <property type="entry name" value="EUKARYOTIC TRANSLATION INITIATION FACTOR 3 SUBUNIT I"/>
    <property type="match status" value="1"/>
</dbReference>
<dbReference type="PANTHER" id="PTHR19877:SF1">
    <property type="entry name" value="EUKARYOTIC TRANSLATION INITIATION FACTOR 3 SUBUNIT I"/>
    <property type="match status" value="1"/>
</dbReference>
<dbReference type="Pfam" id="PF24805">
    <property type="entry name" value="EIF3I"/>
    <property type="match status" value="1"/>
</dbReference>
<dbReference type="SMART" id="SM00320">
    <property type="entry name" value="WD40"/>
    <property type="match status" value="6"/>
</dbReference>
<dbReference type="SUPFAM" id="SSF50978">
    <property type="entry name" value="WD40 repeat-like"/>
    <property type="match status" value="1"/>
</dbReference>
<dbReference type="PROSITE" id="PS00678">
    <property type="entry name" value="WD_REPEATS_1"/>
    <property type="match status" value="2"/>
</dbReference>
<dbReference type="PROSITE" id="PS50082">
    <property type="entry name" value="WD_REPEATS_2"/>
    <property type="match status" value="5"/>
</dbReference>
<dbReference type="PROSITE" id="PS50294">
    <property type="entry name" value="WD_REPEATS_REGION"/>
    <property type="match status" value="2"/>
</dbReference>
<accession>B3MVL6</accession>
<keyword id="KW-0963">Cytoplasm</keyword>
<keyword id="KW-0396">Initiation factor</keyword>
<keyword id="KW-0648">Protein biosynthesis</keyword>
<keyword id="KW-1185">Reference proteome</keyword>
<keyword id="KW-0677">Repeat</keyword>
<keyword id="KW-0853">WD repeat</keyword>